<feature type="chain" id="PRO_1000054204" description="GTP 3',8-cyclase">
    <location>
        <begin position="1"/>
        <end position="350"/>
    </location>
</feature>
<feature type="domain" description="Radical SAM core" evidence="2">
    <location>
        <begin position="27"/>
        <end position="245"/>
    </location>
</feature>
<feature type="binding site" evidence="1">
    <location>
        <position position="36"/>
    </location>
    <ligand>
        <name>GTP</name>
        <dbReference type="ChEBI" id="CHEBI:37565"/>
    </ligand>
</feature>
<feature type="binding site" evidence="1">
    <location>
        <position position="43"/>
    </location>
    <ligand>
        <name>[4Fe-4S] cluster</name>
        <dbReference type="ChEBI" id="CHEBI:49883"/>
        <label>1</label>
        <note>4Fe-4S-S-AdoMet</note>
    </ligand>
</feature>
<feature type="binding site" evidence="1">
    <location>
        <position position="47"/>
    </location>
    <ligand>
        <name>[4Fe-4S] cluster</name>
        <dbReference type="ChEBI" id="CHEBI:49883"/>
        <label>1</label>
        <note>4Fe-4S-S-AdoMet</note>
    </ligand>
</feature>
<feature type="binding site" evidence="1">
    <location>
        <position position="49"/>
    </location>
    <ligand>
        <name>S-adenosyl-L-methionine</name>
        <dbReference type="ChEBI" id="CHEBI:59789"/>
    </ligand>
</feature>
<feature type="binding site" evidence="1">
    <location>
        <position position="50"/>
    </location>
    <ligand>
        <name>[4Fe-4S] cluster</name>
        <dbReference type="ChEBI" id="CHEBI:49883"/>
        <label>1</label>
        <note>4Fe-4S-S-AdoMet</note>
    </ligand>
</feature>
<feature type="binding site" evidence="1">
    <location>
        <position position="87"/>
    </location>
    <ligand>
        <name>GTP</name>
        <dbReference type="ChEBI" id="CHEBI:37565"/>
    </ligand>
</feature>
<feature type="binding site" evidence="1">
    <location>
        <position position="91"/>
    </location>
    <ligand>
        <name>S-adenosyl-L-methionine</name>
        <dbReference type="ChEBI" id="CHEBI:59789"/>
    </ligand>
</feature>
<feature type="binding site" evidence="1">
    <location>
        <position position="118"/>
    </location>
    <ligand>
        <name>GTP</name>
        <dbReference type="ChEBI" id="CHEBI:37565"/>
    </ligand>
</feature>
<feature type="binding site" evidence="1">
    <location>
        <position position="142"/>
    </location>
    <ligand>
        <name>S-adenosyl-L-methionine</name>
        <dbReference type="ChEBI" id="CHEBI:59789"/>
    </ligand>
</feature>
<feature type="binding site" evidence="1">
    <location>
        <position position="179"/>
    </location>
    <ligand>
        <name>GTP</name>
        <dbReference type="ChEBI" id="CHEBI:37565"/>
    </ligand>
</feature>
<feature type="binding site" evidence="1">
    <location>
        <position position="213"/>
    </location>
    <ligand>
        <name>S-adenosyl-L-methionine</name>
        <dbReference type="ChEBI" id="CHEBI:59789"/>
    </ligand>
</feature>
<feature type="binding site" evidence="1">
    <location>
        <position position="277"/>
    </location>
    <ligand>
        <name>[4Fe-4S] cluster</name>
        <dbReference type="ChEBI" id="CHEBI:49883"/>
        <label>2</label>
        <note>4Fe-4S-substrate</note>
    </ligand>
</feature>
<feature type="binding site" evidence="1">
    <location>
        <position position="280"/>
    </location>
    <ligand>
        <name>[4Fe-4S] cluster</name>
        <dbReference type="ChEBI" id="CHEBI:49883"/>
        <label>2</label>
        <note>4Fe-4S-substrate</note>
    </ligand>
</feature>
<feature type="binding site" evidence="1">
    <location>
        <begin position="282"/>
        <end position="284"/>
    </location>
    <ligand>
        <name>GTP</name>
        <dbReference type="ChEBI" id="CHEBI:37565"/>
    </ligand>
</feature>
<feature type="binding site" evidence="1">
    <location>
        <position position="294"/>
    </location>
    <ligand>
        <name>[4Fe-4S] cluster</name>
        <dbReference type="ChEBI" id="CHEBI:49883"/>
        <label>2</label>
        <note>4Fe-4S-substrate</note>
    </ligand>
</feature>
<protein>
    <recommendedName>
        <fullName evidence="1">GTP 3',8-cyclase</fullName>
        <ecNumber evidence="1">4.1.99.22</ecNumber>
    </recommendedName>
    <alternativeName>
        <fullName evidence="1">Molybdenum cofactor biosynthesis protein A</fullName>
    </alternativeName>
</protein>
<sequence length="350" mass="37511">MTVTPLGVPTISRPAAGMPTTGPLVDTFGRIATDLRVSLTDRCNLRCTYCMPAEGLDWLPGEQLLSADELIRLLRIAVTRLGITNVRFTGGEPLVVRHLEDVVAATGALRPRPEMAMTTNGIGLAKRARALKAAGLDRVNVSLDSVDAAHFARITRRDRLGDVLAGLAAAKEAGLTPVKVNAVLDPDTGLDDAVSLLRYCLDHGYQLRIIEQMPLDAEHQWQRGRSLEAAGILAALRAHFTLVPDSKPRGSAPAQLWRVDGGTATVGVIASVSEAFCAACDRTRLTADGQVRNCLFAREESDLRRLLRGGADDDAIEQAWRAAMWTKAAGHGINDPGFEQPSRPMSAIGG</sequence>
<evidence type="ECO:0000255" key="1">
    <source>
        <dbReference type="HAMAP-Rule" id="MF_01225"/>
    </source>
</evidence>
<evidence type="ECO:0000255" key="2">
    <source>
        <dbReference type="PROSITE-ProRule" id="PRU01266"/>
    </source>
</evidence>
<organism>
    <name type="scientific">Mycobacterium sp. (strain MCS)</name>
    <dbReference type="NCBI Taxonomy" id="164756"/>
    <lineage>
        <taxon>Bacteria</taxon>
        <taxon>Bacillati</taxon>
        <taxon>Actinomycetota</taxon>
        <taxon>Actinomycetes</taxon>
        <taxon>Mycobacteriales</taxon>
        <taxon>Mycobacteriaceae</taxon>
        <taxon>Mycobacterium</taxon>
    </lineage>
</organism>
<proteinExistence type="inferred from homology"/>
<comment type="function">
    <text evidence="1">Catalyzes the cyclization of GTP to (8S)-3',8-cyclo-7,8-dihydroguanosine 5'-triphosphate.</text>
</comment>
<comment type="catalytic activity">
    <reaction evidence="1">
        <text>GTP + AH2 + S-adenosyl-L-methionine = (8S)-3',8-cyclo-7,8-dihydroguanosine 5'-triphosphate + 5'-deoxyadenosine + L-methionine + A + H(+)</text>
        <dbReference type="Rhea" id="RHEA:49576"/>
        <dbReference type="ChEBI" id="CHEBI:13193"/>
        <dbReference type="ChEBI" id="CHEBI:15378"/>
        <dbReference type="ChEBI" id="CHEBI:17319"/>
        <dbReference type="ChEBI" id="CHEBI:17499"/>
        <dbReference type="ChEBI" id="CHEBI:37565"/>
        <dbReference type="ChEBI" id="CHEBI:57844"/>
        <dbReference type="ChEBI" id="CHEBI:59789"/>
        <dbReference type="ChEBI" id="CHEBI:131766"/>
        <dbReference type="EC" id="4.1.99.22"/>
    </reaction>
</comment>
<comment type="cofactor">
    <cofactor evidence="1">
        <name>[4Fe-4S] cluster</name>
        <dbReference type="ChEBI" id="CHEBI:49883"/>
    </cofactor>
    <text evidence="1">Binds 2 [4Fe-4S] clusters. Binds 1 [4Fe-4S] cluster coordinated with 3 cysteines and an exchangeable S-adenosyl-L-methionine and 1 [4Fe-4S] cluster coordinated with 3 cysteines and the GTP-derived substrate.</text>
</comment>
<comment type="pathway">
    <text evidence="1">Cofactor biosynthesis; molybdopterin biosynthesis.</text>
</comment>
<comment type="subunit">
    <text evidence="1">Monomer and homodimer.</text>
</comment>
<comment type="similarity">
    <text evidence="1">Belongs to the radical SAM superfamily. MoaA family.</text>
</comment>
<name>MOAA_MYCSS</name>
<accession>Q1B3F3</accession>
<dbReference type="EC" id="4.1.99.22" evidence="1"/>
<dbReference type="EMBL" id="CP000384">
    <property type="protein sequence ID" value="ABG10581.1"/>
    <property type="molecule type" value="Genomic_DNA"/>
</dbReference>
<dbReference type="SMR" id="Q1B3F3"/>
<dbReference type="KEGG" id="mmc:Mmcs_4477"/>
<dbReference type="HOGENOM" id="CLU_009273_0_1_11"/>
<dbReference type="BioCyc" id="MSP164756:G1G6O-4574-MONOMER"/>
<dbReference type="UniPathway" id="UPA00344"/>
<dbReference type="GO" id="GO:0051539">
    <property type="term" value="F:4 iron, 4 sulfur cluster binding"/>
    <property type="evidence" value="ECO:0007669"/>
    <property type="project" value="UniProtKB-UniRule"/>
</dbReference>
<dbReference type="GO" id="GO:0061799">
    <property type="term" value="F:cyclic pyranopterin monophosphate synthase activity"/>
    <property type="evidence" value="ECO:0007669"/>
    <property type="project" value="TreeGrafter"/>
</dbReference>
<dbReference type="GO" id="GO:0061798">
    <property type="term" value="F:GTP 3',8'-cyclase activity"/>
    <property type="evidence" value="ECO:0007669"/>
    <property type="project" value="UniProtKB-UniRule"/>
</dbReference>
<dbReference type="GO" id="GO:0005525">
    <property type="term" value="F:GTP binding"/>
    <property type="evidence" value="ECO:0007669"/>
    <property type="project" value="UniProtKB-UniRule"/>
</dbReference>
<dbReference type="GO" id="GO:0046872">
    <property type="term" value="F:metal ion binding"/>
    <property type="evidence" value="ECO:0007669"/>
    <property type="project" value="UniProtKB-KW"/>
</dbReference>
<dbReference type="GO" id="GO:1904047">
    <property type="term" value="F:S-adenosyl-L-methionine binding"/>
    <property type="evidence" value="ECO:0007669"/>
    <property type="project" value="UniProtKB-UniRule"/>
</dbReference>
<dbReference type="GO" id="GO:0006777">
    <property type="term" value="P:Mo-molybdopterin cofactor biosynthetic process"/>
    <property type="evidence" value="ECO:0007669"/>
    <property type="project" value="UniProtKB-UniRule"/>
</dbReference>
<dbReference type="CDD" id="cd01335">
    <property type="entry name" value="Radical_SAM"/>
    <property type="match status" value="1"/>
</dbReference>
<dbReference type="CDD" id="cd21117">
    <property type="entry name" value="Twitch_MoaA"/>
    <property type="match status" value="1"/>
</dbReference>
<dbReference type="Gene3D" id="3.20.20.70">
    <property type="entry name" value="Aldolase class I"/>
    <property type="match status" value="1"/>
</dbReference>
<dbReference type="HAMAP" id="MF_01225_B">
    <property type="entry name" value="MoaA_B"/>
    <property type="match status" value="1"/>
</dbReference>
<dbReference type="InterPro" id="IPR013785">
    <property type="entry name" value="Aldolase_TIM"/>
</dbReference>
<dbReference type="InterPro" id="IPR006638">
    <property type="entry name" value="Elp3/MiaA/NifB-like_rSAM"/>
</dbReference>
<dbReference type="InterPro" id="IPR013483">
    <property type="entry name" value="MoaA"/>
</dbReference>
<dbReference type="InterPro" id="IPR000385">
    <property type="entry name" value="MoaA_NifB_PqqE_Fe-S-bd_CS"/>
</dbReference>
<dbReference type="InterPro" id="IPR010505">
    <property type="entry name" value="MoaA_twitch"/>
</dbReference>
<dbReference type="InterPro" id="IPR050105">
    <property type="entry name" value="MoCo_biosynth_MoaA/MoaC"/>
</dbReference>
<dbReference type="InterPro" id="IPR007197">
    <property type="entry name" value="rSAM"/>
</dbReference>
<dbReference type="NCBIfam" id="TIGR02666">
    <property type="entry name" value="moaA"/>
    <property type="match status" value="1"/>
</dbReference>
<dbReference type="PANTHER" id="PTHR22960:SF0">
    <property type="entry name" value="MOLYBDENUM COFACTOR BIOSYNTHESIS PROTEIN 1"/>
    <property type="match status" value="1"/>
</dbReference>
<dbReference type="PANTHER" id="PTHR22960">
    <property type="entry name" value="MOLYBDOPTERIN COFACTOR SYNTHESIS PROTEIN A"/>
    <property type="match status" value="1"/>
</dbReference>
<dbReference type="Pfam" id="PF06463">
    <property type="entry name" value="Mob_synth_C"/>
    <property type="match status" value="1"/>
</dbReference>
<dbReference type="Pfam" id="PF04055">
    <property type="entry name" value="Radical_SAM"/>
    <property type="match status" value="1"/>
</dbReference>
<dbReference type="SFLD" id="SFLDG01383">
    <property type="entry name" value="cyclic_pyranopterin_phosphate"/>
    <property type="match status" value="1"/>
</dbReference>
<dbReference type="SFLD" id="SFLDG01072">
    <property type="entry name" value="dehydrogenase_like"/>
    <property type="match status" value="1"/>
</dbReference>
<dbReference type="SMART" id="SM00729">
    <property type="entry name" value="Elp3"/>
    <property type="match status" value="1"/>
</dbReference>
<dbReference type="SUPFAM" id="SSF102114">
    <property type="entry name" value="Radical SAM enzymes"/>
    <property type="match status" value="1"/>
</dbReference>
<dbReference type="PROSITE" id="PS01305">
    <property type="entry name" value="MOAA_NIFB_PQQE"/>
    <property type="match status" value="1"/>
</dbReference>
<dbReference type="PROSITE" id="PS51918">
    <property type="entry name" value="RADICAL_SAM"/>
    <property type="match status" value="1"/>
</dbReference>
<keyword id="KW-0004">4Fe-4S</keyword>
<keyword id="KW-0342">GTP-binding</keyword>
<keyword id="KW-0408">Iron</keyword>
<keyword id="KW-0411">Iron-sulfur</keyword>
<keyword id="KW-0456">Lyase</keyword>
<keyword id="KW-0479">Metal-binding</keyword>
<keyword id="KW-0501">Molybdenum cofactor biosynthesis</keyword>
<keyword id="KW-0547">Nucleotide-binding</keyword>
<keyword id="KW-0949">S-adenosyl-L-methionine</keyword>
<gene>
    <name evidence="1" type="primary">moaA</name>
    <name type="ordered locus">Mmcs_4477</name>
</gene>
<reference key="1">
    <citation type="submission" date="2006-06" db="EMBL/GenBank/DDBJ databases">
        <title>Complete sequence of chromosome of Mycobacterium sp. MCS.</title>
        <authorList>
            <consortium name="US DOE Joint Genome Institute"/>
            <person name="Copeland A."/>
            <person name="Lucas S."/>
            <person name="Lapidus A."/>
            <person name="Barry K."/>
            <person name="Detter J.C."/>
            <person name="Glavina del Rio T."/>
            <person name="Hammon N."/>
            <person name="Israni S."/>
            <person name="Dalin E."/>
            <person name="Tice H."/>
            <person name="Pitluck S."/>
            <person name="Martinez M."/>
            <person name="Schmutz J."/>
            <person name="Larimer F."/>
            <person name="Land M."/>
            <person name="Hauser L."/>
            <person name="Kyrpides N."/>
            <person name="Kim E."/>
            <person name="Miller C.D."/>
            <person name="Hughes J.E."/>
            <person name="Anderson A.J."/>
            <person name="Sims R.C."/>
            <person name="Richardson P."/>
        </authorList>
    </citation>
    <scope>NUCLEOTIDE SEQUENCE [LARGE SCALE GENOMIC DNA]</scope>
    <source>
        <strain>MCS</strain>
    </source>
</reference>